<accession>Q9PQP7</accession>
<sequence length="61" mass="6993">MAKKSLIAKQKKHQKFAVREYTRCVRCGRPHAVNRKFGVCRLCFRDLAYAGAIPGIKKASW</sequence>
<gene>
    <name evidence="1" type="primary">rpsZ</name>
    <name evidence="1" type="synonym">rps14</name>
    <name evidence="1" type="synonym">rpsN</name>
    <name type="ordered locus">UU244</name>
</gene>
<protein>
    <recommendedName>
        <fullName evidence="1">Small ribosomal subunit protein uS14</fullName>
    </recommendedName>
    <alternativeName>
        <fullName evidence="2">30S ribosomal protein S14 type Z</fullName>
    </alternativeName>
</protein>
<dbReference type="EMBL" id="AF222894">
    <property type="protein sequence ID" value="AAF30653.1"/>
    <property type="molecule type" value="Genomic_DNA"/>
</dbReference>
<dbReference type="RefSeq" id="WP_004026507.1">
    <property type="nucleotide sequence ID" value="NC_002162.1"/>
</dbReference>
<dbReference type="SMR" id="Q9PQP7"/>
<dbReference type="STRING" id="273119.UU244"/>
<dbReference type="EnsemblBacteria" id="AAF30653">
    <property type="protein sequence ID" value="AAF30653"/>
    <property type="gene ID" value="UU244"/>
</dbReference>
<dbReference type="KEGG" id="uur:UU244"/>
<dbReference type="eggNOG" id="COG0199">
    <property type="taxonomic scope" value="Bacteria"/>
</dbReference>
<dbReference type="HOGENOM" id="CLU_139869_3_0_14"/>
<dbReference type="OrthoDB" id="9810484at2"/>
<dbReference type="Proteomes" id="UP000000423">
    <property type="component" value="Chromosome"/>
</dbReference>
<dbReference type="GO" id="GO:0005737">
    <property type="term" value="C:cytoplasm"/>
    <property type="evidence" value="ECO:0007669"/>
    <property type="project" value="UniProtKB-ARBA"/>
</dbReference>
<dbReference type="GO" id="GO:0015935">
    <property type="term" value="C:small ribosomal subunit"/>
    <property type="evidence" value="ECO:0007669"/>
    <property type="project" value="TreeGrafter"/>
</dbReference>
<dbReference type="GO" id="GO:0019843">
    <property type="term" value="F:rRNA binding"/>
    <property type="evidence" value="ECO:0007669"/>
    <property type="project" value="UniProtKB-UniRule"/>
</dbReference>
<dbReference type="GO" id="GO:0003735">
    <property type="term" value="F:structural constituent of ribosome"/>
    <property type="evidence" value="ECO:0007669"/>
    <property type="project" value="InterPro"/>
</dbReference>
<dbReference type="GO" id="GO:0008270">
    <property type="term" value="F:zinc ion binding"/>
    <property type="evidence" value="ECO:0007669"/>
    <property type="project" value="UniProtKB-UniRule"/>
</dbReference>
<dbReference type="GO" id="GO:0006412">
    <property type="term" value="P:translation"/>
    <property type="evidence" value="ECO:0007669"/>
    <property type="project" value="UniProtKB-UniRule"/>
</dbReference>
<dbReference type="FunFam" id="4.10.830.10:FF:000001">
    <property type="entry name" value="30S ribosomal protein S14 type Z"/>
    <property type="match status" value="1"/>
</dbReference>
<dbReference type="Gene3D" id="4.10.830.10">
    <property type="entry name" value="30s Ribosomal Protein S14, Chain N"/>
    <property type="match status" value="1"/>
</dbReference>
<dbReference type="HAMAP" id="MF_01364_B">
    <property type="entry name" value="Ribosomal_uS14_2_B"/>
    <property type="match status" value="1"/>
</dbReference>
<dbReference type="InterPro" id="IPR001209">
    <property type="entry name" value="Ribosomal_uS14"/>
</dbReference>
<dbReference type="InterPro" id="IPR023053">
    <property type="entry name" value="Ribosomal_uS14_bact"/>
</dbReference>
<dbReference type="InterPro" id="IPR018271">
    <property type="entry name" value="Ribosomal_uS14_CS"/>
</dbReference>
<dbReference type="InterPro" id="IPR043140">
    <property type="entry name" value="Ribosomal_uS14_sf"/>
</dbReference>
<dbReference type="NCBIfam" id="NF005974">
    <property type="entry name" value="PRK08061.1"/>
    <property type="match status" value="1"/>
</dbReference>
<dbReference type="PANTHER" id="PTHR19836">
    <property type="entry name" value="30S RIBOSOMAL PROTEIN S14"/>
    <property type="match status" value="1"/>
</dbReference>
<dbReference type="PANTHER" id="PTHR19836:SF19">
    <property type="entry name" value="SMALL RIBOSOMAL SUBUNIT PROTEIN US14M"/>
    <property type="match status" value="1"/>
</dbReference>
<dbReference type="Pfam" id="PF00253">
    <property type="entry name" value="Ribosomal_S14"/>
    <property type="match status" value="1"/>
</dbReference>
<dbReference type="SUPFAM" id="SSF57716">
    <property type="entry name" value="Glucocorticoid receptor-like (DNA-binding domain)"/>
    <property type="match status" value="1"/>
</dbReference>
<dbReference type="PROSITE" id="PS00527">
    <property type="entry name" value="RIBOSOMAL_S14"/>
    <property type="match status" value="1"/>
</dbReference>
<feature type="chain" id="PRO_0000130958" description="Small ribosomal subunit protein uS14">
    <location>
        <begin position="1"/>
        <end position="61"/>
    </location>
</feature>
<feature type="binding site" evidence="1">
    <location>
        <position position="24"/>
    </location>
    <ligand>
        <name>Zn(2+)</name>
        <dbReference type="ChEBI" id="CHEBI:29105"/>
    </ligand>
</feature>
<feature type="binding site" evidence="1">
    <location>
        <position position="27"/>
    </location>
    <ligand>
        <name>Zn(2+)</name>
        <dbReference type="ChEBI" id="CHEBI:29105"/>
    </ligand>
</feature>
<feature type="binding site" evidence="1">
    <location>
        <position position="40"/>
    </location>
    <ligand>
        <name>Zn(2+)</name>
        <dbReference type="ChEBI" id="CHEBI:29105"/>
    </ligand>
</feature>
<feature type="binding site" evidence="1">
    <location>
        <position position="43"/>
    </location>
    <ligand>
        <name>Zn(2+)</name>
        <dbReference type="ChEBI" id="CHEBI:29105"/>
    </ligand>
</feature>
<comment type="function">
    <text evidence="1">Binds 16S rRNA, required for the assembly of 30S particles and may also be responsible for determining the conformation of the 16S rRNA at the A site.</text>
</comment>
<comment type="cofactor">
    <cofactor evidence="1">
        <name>Zn(2+)</name>
        <dbReference type="ChEBI" id="CHEBI:29105"/>
    </cofactor>
    <text evidence="1">Binds 1 zinc ion per subunit.</text>
</comment>
<comment type="subunit">
    <text evidence="1">Part of the 30S ribosomal subunit. Contacts proteins S3 and S10.</text>
</comment>
<comment type="similarity">
    <text evidence="1">Belongs to the universal ribosomal protein uS14 family. Zinc-binding uS14 subfamily.</text>
</comment>
<organism>
    <name type="scientific">Ureaplasma parvum serovar 3 (strain ATCC 700970)</name>
    <dbReference type="NCBI Taxonomy" id="273119"/>
    <lineage>
        <taxon>Bacteria</taxon>
        <taxon>Bacillati</taxon>
        <taxon>Mycoplasmatota</taxon>
        <taxon>Mycoplasmoidales</taxon>
        <taxon>Mycoplasmoidaceae</taxon>
        <taxon>Ureaplasma</taxon>
    </lineage>
</organism>
<keyword id="KW-0479">Metal-binding</keyword>
<keyword id="KW-1185">Reference proteome</keyword>
<keyword id="KW-0687">Ribonucleoprotein</keyword>
<keyword id="KW-0689">Ribosomal protein</keyword>
<keyword id="KW-0694">RNA-binding</keyword>
<keyword id="KW-0699">rRNA-binding</keyword>
<keyword id="KW-0862">Zinc</keyword>
<proteinExistence type="inferred from homology"/>
<name>RS14Z_UREPA</name>
<reference key="1">
    <citation type="journal article" date="2000" name="Nature">
        <title>The complete sequence of the mucosal pathogen Ureaplasma urealyticum.</title>
        <authorList>
            <person name="Glass J.I."/>
            <person name="Lefkowitz E.J."/>
            <person name="Glass J.S."/>
            <person name="Heiner C.R."/>
            <person name="Chen E.Y."/>
            <person name="Cassell G.H."/>
        </authorList>
    </citation>
    <scope>NUCLEOTIDE SEQUENCE [LARGE SCALE GENOMIC DNA]</scope>
    <source>
        <strain>ATCC 700970</strain>
    </source>
</reference>
<evidence type="ECO:0000255" key="1">
    <source>
        <dbReference type="HAMAP-Rule" id="MF_01364"/>
    </source>
</evidence>
<evidence type="ECO:0000305" key="2"/>